<gene>
    <name evidence="1" type="primary">pth</name>
    <name type="ordered locus">SPP_0005</name>
</gene>
<dbReference type="EC" id="3.1.1.29" evidence="1"/>
<dbReference type="EMBL" id="CP000920">
    <property type="protein sequence ID" value="ACO21419.1"/>
    <property type="molecule type" value="Genomic_DNA"/>
</dbReference>
<dbReference type="RefSeq" id="WP_000163932.1">
    <property type="nucleotide sequence ID" value="NC_012467.1"/>
</dbReference>
<dbReference type="SMR" id="C1CN70"/>
<dbReference type="GeneID" id="45652531"/>
<dbReference type="KEGG" id="spp:SPP_0005"/>
<dbReference type="HOGENOM" id="CLU_062456_4_1_9"/>
<dbReference type="GO" id="GO:0005737">
    <property type="term" value="C:cytoplasm"/>
    <property type="evidence" value="ECO:0007669"/>
    <property type="project" value="UniProtKB-SubCell"/>
</dbReference>
<dbReference type="GO" id="GO:0004045">
    <property type="term" value="F:peptidyl-tRNA hydrolase activity"/>
    <property type="evidence" value="ECO:0007669"/>
    <property type="project" value="UniProtKB-UniRule"/>
</dbReference>
<dbReference type="GO" id="GO:0000049">
    <property type="term" value="F:tRNA binding"/>
    <property type="evidence" value="ECO:0007669"/>
    <property type="project" value="UniProtKB-UniRule"/>
</dbReference>
<dbReference type="GO" id="GO:0006515">
    <property type="term" value="P:protein quality control for misfolded or incompletely synthesized proteins"/>
    <property type="evidence" value="ECO:0007669"/>
    <property type="project" value="UniProtKB-UniRule"/>
</dbReference>
<dbReference type="GO" id="GO:0072344">
    <property type="term" value="P:rescue of stalled ribosome"/>
    <property type="evidence" value="ECO:0007669"/>
    <property type="project" value="UniProtKB-UniRule"/>
</dbReference>
<dbReference type="CDD" id="cd00462">
    <property type="entry name" value="PTH"/>
    <property type="match status" value="1"/>
</dbReference>
<dbReference type="FunFam" id="3.40.50.1470:FF:000001">
    <property type="entry name" value="Peptidyl-tRNA hydrolase"/>
    <property type="match status" value="1"/>
</dbReference>
<dbReference type="Gene3D" id="3.40.50.1470">
    <property type="entry name" value="Peptidyl-tRNA hydrolase"/>
    <property type="match status" value="1"/>
</dbReference>
<dbReference type="HAMAP" id="MF_00083">
    <property type="entry name" value="Pept_tRNA_hydro_bact"/>
    <property type="match status" value="1"/>
</dbReference>
<dbReference type="InterPro" id="IPR001328">
    <property type="entry name" value="Pept_tRNA_hydro"/>
</dbReference>
<dbReference type="InterPro" id="IPR018171">
    <property type="entry name" value="Pept_tRNA_hydro_CS"/>
</dbReference>
<dbReference type="InterPro" id="IPR036416">
    <property type="entry name" value="Pept_tRNA_hydro_sf"/>
</dbReference>
<dbReference type="NCBIfam" id="TIGR00447">
    <property type="entry name" value="pth"/>
    <property type="match status" value="1"/>
</dbReference>
<dbReference type="PANTHER" id="PTHR17224">
    <property type="entry name" value="PEPTIDYL-TRNA HYDROLASE"/>
    <property type="match status" value="1"/>
</dbReference>
<dbReference type="PANTHER" id="PTHR17224:SF1">
    <property type="entry name" value="PEPTIDYL-TRNA HYDROLASE"/>
    <property type="match status" value="1"/>
</dbReference>
<dbReference type="Pfam" id="PF01195">
    <property type="entry name" value="Pept_tRNA_hydro"/>
    <property type="match status" value="1"/>
</dbReference>
<dbReference type="SUPFAM" id="SSF53178">
    <property type="entry name" value="Peptidyl-tRNA hydrolase-like"/>
    <property type="match status" value="1"/>
</dbReference>
<dbReference type="PROSITE" id="PS01195">
    <property type="entry name" value="PEPT_TRNA_HYDROL_1"/>
    <property type="match status" value="1"/>
</dbReference>
<dbReference type="PROSITE" id="PS01196">
    <property type="entry name" value="PEPT_TRNA_HYDROL_2"/>
    <property type="match status" value="1"/>
</dbReference>
<sequence>MTKLLVGLGNPGDKYFETKHNVGFMLIDQLAKKQNVTFTHDKIFQADLASFFLNGEKIYLVKPTTFMNESGKAVHALLTYYGLDIDDLLIIYDDLDMEVGKIRLRAKGSAGGHNGIKSIIQHIGTQVFNRVKIGIGRPKNGMSVVHHVLSKFDRDDYIGILQSVDKVDDSVNYYLQEKNFEKTMQRYNG</sequence>
<organism>
    <name type="scientific">Streptococcus pneumoniae (strain P1031)</name>
    <dbReference type="NCBI Taxonomy" id="488223"/>
    <lineage>
        <taxon>Bacteria</taxon>
        <taxon>Bacillati</taxon>
        <taxon>Bacillota</taxon>
        <taxon>Bacilli</taxon>
        <taxon>Lactobacillales</taxon>
        <taxon>Streptococcaceae</taxon>
        <taxon>Streptococcus</taxon>
    </lineage>
</organism>
<evidence type="ECO:0000255" key="1">
    <source>
        <dbReference type="HAMAP-Rule" id="MF_00083"/>
    </source>
</evidence>
<accession>C1CN70</accession>
<feature type="chain" id="PRO_1000118414" description="Peptidyl-tRNA hydrolase">
    <location>
        <begin position="1"/>
        <end position="189"/>
    </location>
</feature>
<feature type="active site" description="Proton acceptor" evidence="1">
    <location>
        <position position="20"/>
    </location>
</feature>
<feature type="binding site" evidence="1">
    <location>
        <position position="15"/>
    </location>
    <ligand>
        <name>tRNA</name>
        <dbReference type="ChEBI" id="CHEBI:17843"/>
    </ligand>
</feature>
<feature type="binding site" evidence="1">
    <location>
        <position position="66"/>
    </location>
    <ligand>
        <name>tRNA</name>
        <dbReference type="ChEBI" id="CHEBI:17843"/>
    </ligand>
</feature>
<feature type="binding site" evidence="1">
    <location>
        <position position="68"/>
    </location>
    <ligand>
        <name>tRNA</name>
        <dbReference type="ChEBI" id="CHEBI:17843"/>
    </ligand>
</feature>
<feature type="binding site" evidence="1">
    <location>
        <position position="114"/>
    </location>
    <ligand>
        <name>tRNA</name>
        <dbReference type="ChEBI" id="CHEBI:17843"/>
    </ligand>
</feature>
<feature type="site" description="Discriminates between blocked and unblocked aminoacyl-tRNA" evidence="1">
    <location>
        <position position="10"/>
    </location>
</feature>
<feature type="site" description="Stabilizes the basic form of H active site to accept a proton" evidence="1">
    <location>
        <position position="93"/>
    </location>
</feature>
<keyword id="KW-0963">Cytoplasm</keyword>
<keyword id="KW-0378">Hydrolase</keyword>
<keyword id="KW-0694">RNA-binding</keyword>
<keyword id="KW-0820">tRNA-binding</keyword>
<name>PTH_STRZP</name>
<proteinExistence type="inferred from homology"/>
<reference key="1">
    <citation type="journal article" date="2010" name="Genome Biol.">
        <title>Structure and dynamics of the pan-genome of Streptococcus pneumoniae and closely related species.</title>
        <authorList>
            <person name="Donati C."/>
            <person name="Hiller N.L."/>
            <person name="Tettelin H."/>
            <person name="Muzzi A."/>
            <person name="Croucher N.J."/>
            <person name="Angiuoli S.V."/>
            <person name="Oggioni M."/>
            <person name="Dunning Hotopp J.C."/>
            <person name="Hu F.Z."/>
            <person name="Riley D.R."/>
            <person name="Covacci A."/>
            <person name="Mitchell T.J."/>
            <person name="Bentley S.D."/>
            <person name="Kilian M."/>
            <person name="Ehrlich G.D."/>
            <person name="Rappuoli R."/>
            <person name="Moxon E.R."/>
            <person name="Masignani V."/>
        </authorList>
    </citation>
    <scope>NUCLEOTIDE SEQUENCE [LARGE SCALE GENOMIC DNA]</scope>
    <source>
        <strain>P1031</strain>
    </source>
</reference>
<protein>
    <recommendedName>
        <fullName evidence="1">Peptidyl-tRNA hydrolase</fullName>
        <shortName evidence="1">Pth</shortName>
        <ecNumber evidence="1">3.1.1.29</ecNumber>
    </recommendedName>
</protein>
<comment type="function">
    <text evidence="1">Hydrolyzes ribosome-free peptidyl-tRNAs (with 1 or more amino acids incorporated), which drop off the ribosome during protein synthesis, or as a result of ribosome stalling.</text>
</comment>
<comment type="function">
    <text evidence="1">Catalyzes the release of premature peptidyl moieties from peptidyl-tRNA molecules trapped in stalled 50S ribosomal subunits, and thus maintains levels of free tRNAs and 50S ribosomes.</text>
</comment>
<comment type="catalytic activity">
    <reaction evidence="1">
        <text>an N-acyl-L-alpha-aminoacyl-tRNA + H2O = an N-acyl-L-amino acid + a tRNA + H(+)</text>
        <dbReference type="Rhea" id="RHEA:54448"/>
        <dbReference type="Rhea" id="RHEA-COMP:10123"/>
        <dbReference type="Rhea" id="RHEA-COMP:13883"/>
        <dbReference type="ChEBI" id="CHEBI:15377"/>
        <dbReference type="ChEBI" id="CHEBI:15378"/>
        <dbReference type="ChEBI" id="CHEBI:59874"/>
        <dbReference type="ChEBI" id="CHEBI:78442"/>
        <dbReference type="ChEBI" id="CHEBI:138191"/>
        <dbReference type="EC" id="3.1.1.29"/>
    </reaction>
</comment>
<comment type="subunit">
    <text evidence="1">Monomer.</text>
</comment>
<comment type="subcellular location">
    <subcellularLocation>
        <location evidence="1">Cytoplasm</location>
    </subcellularLocation>
</comment>
<comment type="similarity">
    <text evidence="1">Belongs to the PTH family.</text>
</comment>